<accession>A6LDP0</accession>
<feature type="chain" id="PRO_1000001023" description="Dihydroxy-acid dehydratase">
    <location>
        <begin position="1"/>
        <end position="611"/>
    </location>
</feature>
<feature type="region of interest" description="Disordered" evidence="2">
    <location>
        <begin position="565"/>
        <end position="586"/>
    </location>
</feature>
<feature type="compositionally biased region" description="Basic and acidic residues" evidence="2">
    <location>
        <begin position="565"/>
        <end position="574"/>
    </location>
</feature>
<feature type="active site" description="Proton acceptor" evidence="1">
    <location>
        <position position="515"/>
    </location>
</feature>
<feature type="binding site" evidence="1">
    <location>
        <position position="82"/>
    </location>
    <ligand>
        <name>Mg(2+)</name>
        <dbReference type="ChEBI" id="CHEBI:18420"/>
    </ligand>
</feature>
<feature type="binding site" evidence="1">
    <location>
        <position position="123"/>
    </location>
    <ligand>
        <name>[2Fe-2S] cluster</name>
        <dbReference type="ChEBI" id="CHEBI:190135"/>
    </ligand>
</feature>
<feature type="binding site" evidence="1">
    <location>
        <position position="124"/>
    </location>
    <ligand>
        <name>Mg(2+)</name>
        <dbReference type="ChEBI" id="CHEBI:18420"/>
    </ligand>
</feature>
<feature type="binding site" description="via carbamate group" evidence="1">
    <location>
        <position position="125"/>
    </location>
    <ligand>
        <name>Mg(2+)</name>
        <dbReference type="ChEBI" id="CHEBI:18420"/>
    </ligand>
</feature>
<feature type="binding site" evidence="1">
    <location>
        <position position="192"/>
    </location>
    <ligand>
        <name>[2Fe-2S] cluster</name>
        <dbReference type="ChEBI" id="CHEBI:190135"/>
    </ligand>
</feature>
<feature type="binding site" evidence="1">
    <location>
        <position position="489"/>
    </location>
    <ligand>
        <name>Mg(2+)</name>
        <dbReference type="ChEBI" id="CHEBI:18420"/>
    </ligand>
</feature>
<feature type="modified residue" description="N6-carboxylysine" evidence="1">
    <location>
        <position position="125"/>
    </location>
</feature>
<proteinExistence type="inferred from homology"/>
<gene>
    <name evidence="1" type="primary">ilvD</name>
    <name type="ordered locus">BDI_2073</name>
</gene>
<comment type="function">
    <text evidence="1">Functions in the biosynthesis of branched-chain amino acids. Catalyzes the dehydration of (2R,3R)-2,3-dihydroxy-3-methylpentanoate (2,3-dihydroxy-3-methylvalerate) into 2-oxo-3-methylpentanoate (2-oxo-3-methylvalerate) and of (2R)-2,3-dihydroxy-3-methylbutanoate (2,3-dihydroxyisovalerate) into 2-oxo-3-methylbutanoate (2-oxoisovalerate), the penultimate precursor to L-isoleucine and L-valine, respectively.</text>
</comment>
<comment type="catalytic activity">
    <reaction evidence="1">
        <text>(2R)-2,3-dihydroxy-3-methylbutanoate = 3-methyl-2-oxobutanoate + H2O</text>
        <dbReference type="Rhea" id="RHEA:24809"/>
        <dbReference type="ChEBI" id="CHEBI:11851"/>
        <dbReference type="ChEBI" id="CHEBI:15377"/>
        <dbReference type="ChEBI" id="CHEBI:49072"/>
        <dbReference type="EC" id="4.2.1.9"/>
    </reaction>
    <physiologicalReaction direction="left-to-right" evidence="1">
        <dbReference type="Rhea" id="RHEA:24810"/>
    </physiologicalReaction>
</comment>
<comment type="catalytic activity">
    <reaction evidence="1">
        <text>(2R,3R)-2,3-dihydroxy-3-methylpentanoate = (S)-3-methyl-2-oxopentanoate + H2O</text>
        <dbReference type="Rhea" id="RHEA:27694"/>
        <dbReference type="ChEBI" id="CHEBI:15377"/>
        <dbReference type="ChEBI" id="CHEBI:35146"/>
        <dbReference type="ChEBI" id="CHEBI:49258"/>
        <dbReference type="EC" id="4.2.1.9"/>
    </reaction>
    <physiologicalReaction direction="left-to-right" evidence="1">
        <dbReference type="Rhea" id="RHEA:27695"/>
    </physiologicalReaction>
</comment>
<comment type="cofactor">
    <cofactor evidence="1">
        <name>[2Fe-2S] cluster</name>
        <dbReference type="ChEBI" id="CHEBI:190135"/>
    </cofactor>
    <text evidence="1">Binds 1 [2Fe-2S] cluster per subunit. This cluster acts as a Lewis acid cofactor.</text>
</comment>
<comment type="cofactor">
    <cofactor evidence="1">
        <name>Mg(2+)</name>
        <dbReference type="ChEBI" id="CHEBI:18420"/>
    </cofactor>
</comment>
<comment type="pathway">
    <text evidence="1">Amino-acid biosynthesis; L-isoleucine biosynthesis; L-isoleucine from 2-oxobutanoate: step 3/4.</text>
</comment>
<comment type="pathway">
    <text evidence="1">Amino-acid biosynthesis; L-valine biosynthesis; L-valine from pyruvate: step 3/4.</text>
</comment>
<comment type="subunit">
    <text evidence="1">Homodimer.</text>
</comment>
<comment type="similarity">
    <text evidence="1">Belongs to the IlvD/Edd family.</text>
</comment>
<dbReference type="EC" id="4.2.1.9" evidence="1"/>
<dbReference type="EMBL" id="CP000140">
    <property type="protein sequence ID" value="ABR43804.1"/>
    <property type="molecule type" value="Genomic_DNA"/>
</dbReference>
<dbReference type="RefSeq" id="WP_005864376.1">
    <property type="nucleotide sequence ID" value="NC_009615.1"/>
</dbReference>
<dbReference type="SMR" id="A6LDP0"/>
<dbReference type="STRING" id="435591.BDI_2073"/>
<dbReference type="PaxDb" id="435591-BDI_2073"/>
<dbReference type="GeneID" id="93522065"/>
<dbReference type="KEGG" id="pdi:BDI_2073"/>
<dbReference type="eggNOG" id="COG0129">
    <property type="taxonomic scope" value="Bacteria"/>
</dbReference>
<dbReference type="HOGENOM" id="CLU_014271_4_2_10"/>
<dbReference type="BioCyc" id="PDIS435591:G1G5A-2127-MONOMER"/>
<dbReference type="UniPathway" id="UPA00047">
    <property type="reaction ID" value="UER00057"/>
</dbReference>
<dbReference type="UniPathway" id="UPA00049">
    <property type="reaction ID" value="UER00061"/>
</dbReference>
<dbReference type="Proteomes" id="UP000000566">
    <property type="component" value="Chromosome"/>
</dbReference>
<dbReference type="GO" id="GO:0005829">
    <property type="term" value="C:cytosol"/>
    <property type="evidence" value="ECO:0007669"/>
    <property type="project" value="TreeGrafter"/>
</dbReference>
<dbReference type="GO" id="GO:0051537">
    <property type="term" value="F:2 iron, 2 sulfur cluster binding"/>
    <property type="evidence" value="ECO:0007669"/>
    <property type="project" value="UniProtKB-UniRule"/>
</dbReference>
<dbReference type="GO" id="GO:0004160">
    <property type="term" value="F:dihydroxy-acid dehydratase activity"/>
    <property type="evidence" value="ECO:0007669"/>
    <property type="project" value="UniProtKB-UniRule"/>
</dbReference>
<dbReference type="GO" id="GO:0000287">
    <property type="term" value="F:magnesium ion binding"/>
    <property type="evidence" value="ECO:0007669"/>
    <property type="project" value="UniProtKB-UniRule"/>
</dbReference>
<dbReference type="GO" id="GO:0009097">
    <property type="term" value="P:isoleucine biosynthetic process"/>
    <property type="evidence" value="ECO:0007669"/>
    <property type="project" value="UniProtKB-UniRule"/>
</dbReference>
<dbReference type="GO" id="GO:0009099">
    <property type="term" value="P:L-valine biosynthetic process"/>
    <property type="evidence" value="ECO:0007669"/>
    <property type="project" value="UniProtKB-UniRule"/>
</dbReference>
<dbReference type="FunFam" id="3.50.30.80:FF:000001">
    <property type="entry name" value="Dihydroxy-acid dehydratase"/>
    <property type="match status" value="1"/>
</dbReference>
<dbReference type="Gene3D" id="3.50.30.80">
    <property type="entry name" value="IlvD/EDD C-terminal domain-like"/>
    <property type="match status" value="1"/>
</dbReference>
<dbReference type="HAMAP" id="MF_00012">
    <property type="entry name" value="IlvD"/>
    <property type="match status" value="1"/>
</dbReference>
<dbReference type="InterPro" id="IPR042096">
    <property type="entry name" value="Dihydro-acid_dehy_C"/>
</dbReference>
<dbReference type="InterPro" id="IPR004404">
    <property type="entry name" value="DihydroxyA_deHydtase"/>
</dbReference>
<dbReference type="InterPro" id="IPR020558">
    <property type="entry name" value="DiOHA_6PGluconate_deHydtase_CS"/>
</dbReference>
<dbReference type="InterPro" id="IPR056740">
    <property type="entry name" value="ILV_EDD_C"/>
</dbReference>
<dbReference type="InterPro" id="IPR000581">
    <property type="entry name" value="ILV_EDD_N"/>
</dbReference>
<dbReference type="InterPro" id="IPR037237">
    <property type="entry name" value="IlvD/EDD_N"/>
</dbReference>
<dbReference type="NCBIfam" id="TIGR00110">
    <property type="entry name" value="ilvD"/>
    <property type="match status" value="1"/>
</dbReference>
<dbReference type="NCBIfam" id="NF009103">
    <property type="entry name" value="PRK12448.1"/>
    <property type="match status" value="1"/>
</dbReference>
<dbReference type="PANTHER" id="PTHR43661">
    <property type="entry name" value="D-XYLONATE DEHYDRATASE"/>
    <property type="match status" value="1"/>
</dbReference>
<dbReference type="PANTHER" id="PTHR43661:SF3">
    <property type="entry name" value="D-XYLONATE DEHYDRATASE YAGF-RELATED"/>
    <property type="match status" value="1"/>
</dbReference>
<dbReference type="Pfam" id="PF24877">
    <property type="entry name" value="ILV_EDD_C"/>
    <property type="match status" value="1"/>
</dbReference>
<dbReference type="Pfam" id="PF00920">
    <property type="entry name" value="ILVD_EDD_N"/>
    <property type="match status" value="1"/>
</dbReference>
<dbReference type="SUPFAM" id="SSF143975">
    <property type="entry name" value="IlvD/EDD N-terminal domain-like"/>
    <property type="match status" value="1"/>
</dbReference>
<dbReference type="SUPFAM" id="SSF52016">
    <property type="entry name" value="LeuD/IlvD-like"/>
    <property type="match status" value="1"/>
</dbReference>
<dbReference type="PROSITE" id="PS00886">
    <property type="entry name" value="ILVD_EDD_1"/>
    <property type="match status" value="1"/>
</dbReference>
<dbReference type="PROSITE" id="PS00887">
    <property type="entry name" value="ILVD_EDD_2"/>
    <property type="match status" value="1"/>
</dbReference>
<name>ILVD_PARD8</name>
<protein>
    <recommendedName>
        <fullName evidence="1">Dihydroxy-acid dehydratase</fullName>
        <shortName evidence="1">DAD</shortName>
        <ecNumber evidence="1">4.2.1.9</ecNumber>
    </recommendedName>
</protein>
<reference key="1">
    <citation type="journal article" date="2007" name="PLoS Biol.">
        <title>Evolution of symbiotic bacteria in the distal human intestine.</title>
        <authorList>
            <person name="Xu J."/>
            <person name="Mahowald M.A."/>
            <person name="Ley R.E."/>
            <person name="Lozupone C.A."/>
            <person name="Hamady M."/>
            <person name="Martens E.C."/>
            <person name="Henrissat B."/>
            <person name="Coutinho P.M."/>
            <person name="Minx P."/>
            <person name="Latreille P."/>
            <person name="Cordum H."/>
            <person name="Van Brunt A."/>
            <person name="Kim K."/>
            <person name="Fulton R.S."/>
            <person name="Fulton L.A."/>
            <person name="Clifton S.W."/>
            <person name="Wilson R.K."/>
            <person name="Knight R.D."/>
            <person name="Gordon J.I."/>
        </authorList>
    </citation>
    <scope>NUCLEOTIDE SEQUENCE [LARGE SCALE GENOMIC DNA]</scope>
    <source>
        <strain>ATCC 8503 / DSM 20701 / CIP 104284 / JCM 5825 / NCTC 11152</strain>
    </source>
</reference>
<organism>
    <name type="scientific">Parabacteroides distasonis (strain ATCC 8503 / DSM 20701 / CIP 104284 / JCM 5825 / NCTC 11152)</name>
    <dbReference type="NCBI Taxonomy" id="435591"/>
    <lineage>
        <taxon>Bacteria</taxon>
        <taxon>Pseudomonadati</taxon>
        <taxon>Bacteroidota</taxon>
        <taxon>Bacteroidia</taxon>
        <taxon>Bacteroidales</taxon>
        <taxon>Tannerellaceae</taxon>
        <taxon>Parabacteroides</taxon>
    </lineage>
</organism>
<evidence type="ECO:0000255" key="1">
    <source>
        <dbReference type="HAMAP-Rule" id="MF_00012"/>
    </source>
</evidence>
<evidence type="ECO:0000256" key="2">
    <source>
        <dbReference type="SAM" id="MobiDB-lite"/>
    </source>
</evidence>
<sequence length="611" mass="65859">MKNPLRSSFSTEGRRMAGARALWRANGMKEEQFGKPIIAIVNSFTQFVPGHTHLHEIGQLVKAEIEKQGCFAAEFNTIAIDDGIAMGHDGMLYSLPSRDIIADSVEYMVNAHKADAMVCISNCDKITPGMLMASMRLNIPTVFVSGGPMEAGELDGRHLDLIDAMIESADTSVSDERIEQVERHACPGCGCCSGMFTANSMNCLNEAIGLALPGNGTIVATHKNRIQLFRDAAKQIVENAYKYYRDGDDSVLPRNIATRQAFLNAMSLDIAMGGSTNTVLHLLAVAQEAGADFHMEDIDMLSRKTPCLCKVAPNTHTYHVQDVNRAGGILGIMNELMKAGLVDGSTRRADGLTLAEAVDKYAVTSPNVTEEAIRKYKSAPAHRFSIQMGSQESYYKELDTDRAEGCIRDVEHAYSKDGGLAVLRGNIALDGCVVKTAGVDESIWKFSGPAKVFDSQDAACEGILGGKVVSGDVVVITYEGPKGGPGMQEMLYPTSYIKSRHLGKECALITDGRFSGGTSGLSIGHISPEAASGGAIGLVRDGDIIEINIPERSINVRLSDEELAERRKAEEARGKKAFTPPTRQREVSKALRAYGKMVSSADKGGVRIVED</sequence>
<keyword id="KW-0001">2Fe-2S</keyword>
<keyword id="KW-0028">Amino-acid biosynthesis</keyword>
<keyword id="KW-0100">Branched-chain amino acid biosynthesis</keyword>
<keyword id="KW-0408">Iron</keyword>
<keyword id="KW-0411">Iron-sulfur</keyword>
<keyword id="KW-0456">Lyase</keyword>
<keyword id="KW-0460">Magnesium</keyword>
<keyword id="KW-0479">Metal-binding</keyword>
<keyword id="KW-1185">Reference proteome</keyword>